<proteinExistence type="inferred from homology"/>
<gene>
    <name type="primary">rps4</name>
</gene>
<name>RR4_DIPFO</name>
<organism>
    <name type="scientific">Diphyscium foliosum</name>
    <name type="common">Nut-moss</name>
    <name type="synonym">Buxbaumia foliosa</name>
    <dbReference type="NCBI Taxonomy" id="82928"/>
    <lineage>
        <taxon>Eukaryota</taxon>
        <taxon>Viridiplantae</taxon>
        <taxon>Streptophyta</taxon>
        <taxon>Embryophyta</taxon>
        <taxon>Bryophyta</taxon>
        <taxon>Bryophytina</taxon>
        <taxon>Bryopsida</taxon>
        <taxon>Diphysciidae</taxon>
        <taxon>Diphysciales</taxon>
        <taxon>Diphysciaceae</taxon>
        <taxon>Diphyscium</taxon>
    </lineage>
</organism>
<dbReference type="EMBL" id="AJ251065">
    <property type="protein sequence ID" value="CAB92129.1"/>
    <property type="molecule type" value="Genomic_DNA"/>
</dbReference>
<dbReference type="EMBL" id="AF478264">
    <property type="protein sequence ID" value="AAM27360.1"/>
    <property type="molecule type" value="Genomic_DNA"/>
</dbReference>
<dbReference type="RefSeq" id="YP_009732865.1">
    <property type="nucleotide sequence ID" value="NC_046057.1"/>
</dbReference>
<dbReference type="SMR" id="Q9M4B9"/>
<dbReference type="GeneID" id="44153289"/>
<dbReference type="GO" id="GO:0009507">
    <property type="term" value="C:chloroplast"/>
    <property type="evidence" value="ECO:0007669"/>
    <property type="project" value="UniProtKB-SubCell"/>
</dbReference>
<dbReference type="GO" id="GO:0015935">
    <property type="term" value="C:small ribosomal subunit"/>
    <property type="evidence" value="ECO:0007669"/>
    <property type="project" value="InterPro"/>
</dbReference>
<dbReference type="GO" id="GO:0019843">
    <property type="term" value="F:rRNA binding"/>
    <property type="evidence" value="ECO:0007669"/>
    <property type="project" value="UniProtKB-UniRule"/>
</dbReference>
<dbReference type="GO" id="GO:0003735">
    <property type="term" value="F:structural constituent of ribosome"/>
    <property type="evidence" value="ECO:0007669"/>
    <property type="project" value="InterPro"/>
</dbReference>
<dbReference type="GO" id="GO:0042274">
    <property type="term" value="P:ribosomal small subunit biogenesis"/>
    <property type="evidence" value="ECO:0007669"/>
    <property type="project" value="TreeGrafter"/>
</dbReference>
<dbReference type="GO" id="GO:0006412">
    <property type="term" value="P:translation"/>
    <property type="evidence" value="ECO:0007669"/>
    <property type="project" value="UniProtKB-UniRule"/>
</dbReference>
<dbReference type="CDD" id="cd00165">
    <property type="entry name" value="S4"/>
    <property type="match status" value="1"/>
</dbReference>
<dbReference type="FunFam" id="1.10.1050.10:FF:000002">
    <property type="entry name" value="30S ribosomal protein S4, chloroplastic"/>
    <property type="match status" value="1"/>
</dbReference>
<dbReference type="FunFam" id="3.10.290.10:FF:000081">
    <property type="entry name" value="30S ribosomal protein S4, chloroplastic"/>
    <property type="match status" value="1"/>
</dbReference>
<dbReference type="Gene3D" id="1.10.1050.10">
    <property type="entry name" value="Ribosomal Protein S4 Delta 41, Chain A, domain 1"/>
    <property type="match status" value="1"/>
</dbReference>
<dbReference type="Gene3D" id="3.10.290.10">
    <property type="entry name" value="RNA-binding S4 domain"/>
    <property type="match status" value="1"/>
</dbReference>
<dbReference type="HAMAP" id="MF_01306_B">
    <property type="entry name" value="Ribosomal_uS4_B"/>
    <property type="match status" value="1"/>
</dbReference>
<dbReference type="InterPro" id="IPR022801">
    <property type="entry name" value="Ribosomal_uS4"/>
</dbReference>
<dbReference type="InterPro" id="IPR005709">
    <property type="entry name" value="Ribosomal_uS4_bac-type"/>
</dbReference>
<dbReference type="InterPro" id="IPR018079">
    <property type="entry name" value="Ribosomal_uS4_CS"/>
</dbReference>
<dbReference type="InterPro" id="IPR001912">
    <property type="entry name" value="Ribosomal_uS4_N"/>
</dbReference>
<dbReference type="InterPro" id="IPR002942">
    <property type="entry name" value="S4_RNA-bd"/>
</dbReference>
<dbReference type="InterPro" id="IPR036986">
    <property type="entry name" value="S4_RNA-bd_sf"/>
</dbReference>
<dbReference type="NCBIfam" id="NF003717">
    <property type="entry name" value="PRK05327.1"/>
    <property type="match status" value="1"/>
</dbReference>
<dbReference type="NCBIfam" id="TIGR01017">
    <property type="entry name" value="rpsD_bact"/>
    <property type="match status" value="1"/>
</dbReference>
<dbReference type="PANTHER" id="PTHR11831">
    <property type="entry name" value="30S 40S RIBOSOMAL PROTEIN"/>
    <property type="match status" value="1"/>
</dbReference>
<dbReference type="PANTHER" id="PTHR11831:SF4">
    <property type="entry name" value="SMALL RIBOSOMAL SUBUNIT PROTEIN US4M"/>
    <property type="match status" value="1"/>
</dbReference>
<dbReference type="Pfam" id="PF00163">
    <property type="entry name" value="Ribosomal_S4"/>
    <property type="match status" value="1"/>
</dbReference>
<dbReference type="Pfam" id="PF01479">
    <property type="entry name" value="S4"/>
    <property type="match status" value="1"/>
</dbReference>
<dbReference type="SMART" id="SM01390">
    <property type="entry name" value="Ribosomal_S4"/>
    <property type="match status" value="1"/>
</dbReference>
<dbReference type="SMART" id="SM00363">
    <property type="entry name" value="S4"/>
    <property type="match status" value="1"/>
</dbReference>
<dbReference type="SUPFAM" id="SSF55174">
    <property type="entry name" value="Alpha-L RNA-binding motif"/>
    <property type="match status" value="1"/>
</dbReference>
<dbReference type="PROSITE" id="PS00632">
    <property type="entry name" value="RIBOSOMAL_S4"/>
    <property type="match status" value="1"/>
</dbReference>
<dbReference type="PROSITE" id="PS50889">
    <property type="entry name" value="S4"/>
    <property type="match status" value="1"/>
</dbReference>
<keyword id="KW-0150">Chloroplast</keyword>
<keyword id="KW-0934">Plastid</keyword>
<keyword id="KW-0687">Ribonucleoprotein</keyword>
<keyword id="KW-0689">Ribosomal protein</keyword>
<keyword id="KW-0694">RNA-binding</keyword>
<keyword id="KW-0699">rRNA-binding</keyword>
<feature type="chain" id="PRO_0000132569" description="Small ribosomal subunit protein uS4c">
    <location>
        <begin position="1"/>
        <end position="202"/>
    </location>
</feature>
<feature type="domain" description="S4 RNA-binding">
    <location>
        <begin position="90"/>
        <end position="165"/>
    </location>
</feature>
<evidence type="ECO:0000250" key="1"/>
<evidence type="ECO:0000305" key="2"/>
<reference key="1">
    <citation type="submission" date="1999-11" db="EMBL/GenBank/DDBJ databases">
        <title>A molecular approach to bryophyte systematics.</title>
        <authorList>
            <person name="Capesius I."/>
            <person name="Bloecher R."/>
        </authorList>
    </citation>
    <scope>NUCLEOTIDE SEQUENCE [GENOMIC DNA]</scope>
    <source>
        <tissue>Gametophyte</tissue>
    </source>
</reference>
<reference key="2">
    <citation type="journal article" date="2003" name="Syst. Bot.">
        <title>The phylogeny of basal peristomate mosses: evidence from cpDNA, and implications for peristome evolution.</title>
        <authorList>
            <person name="Magombo Z.L.K."/>
        </authorList>
        <dbReference type="AGRICOLA" id="IND43643275"/>
    </citation>
    <scope>NUCLEOTIDE SEQUENCE [GENOMIC DNA]</scope>
</reference>
<comment type="function">
    <text evidence="1">One of the primary rRNA binding proteins, it binds directly to 16S rRNA where it nucleates assembly of the body of the 30S subunit.</text>
</comment>
<comment type="function">
    <text evidence="1">With S5 and S12 plays an important role in translational accuracy.</text>
</comment>
<comment type="subunit">
    <text evidence="1">Part of the 30S ribosomal subunit. Contacts protein S5. The interaction surface between S4 and S5 is involved in control of translational fidelity (By similarity).</text>
</comment>
<comment type="subcellular location">
    <subcellularLocation>
        <location>Plastid</location>
        <location>Chloroplast</location>
    </subcellularLocation>
</comment>
<comment type="similarity">
    <text evidence="2">Belongs to the universal ribosomal protein uS4 family.</text>
</comment>
<geneLocation type="chloroplast"/>
<protein>
    <recommendedName>
        <fullName evidence="2">Small ribosomal subunit protein uS4c</fullName>
    </recommendedName>
    <alternativeName>
        <fullName>30S ribosomal protein S4, chloroplastic</fullName>
    </alternativeName>
</protein>
<accession>Q9M4B9</accession>
<accession>Q8MG66</accession>
<sequence length="202" mass="23489">MSRYRGPRVRIIRRLGALPGLTSKTPQLKSNSINQSASNKKISQYRIRLEEKQKLRFHYGITERQLLKYVRIARKAKGSTGQVLLQLLEMRLDNILFRLGMAPTIPGARQLVNHRHILVNDRIVNIPSYRCKPQDFITIKERQKSQGIIVKNMDLSQKYKIPNHLTFNSLEKKGLVNQILDRESIGLKINELLVVEYYSRQA</sequence>